<keyword id="KW-1185">Reference proteome</keyword>
<feature type="chain" id="PRO_0000342321" description="Uncharacterized protein 440">
    <location>
        <begin position="1"/>
        <end position="440"/>
    </location>
</feature>
<organismHost>
    <name type="scientific">Saccharolobus islandicus</name>
    <name type="common">Sulfolobus islandicus</name>
    <dbReference type="NCBI Taxonomy" id="43080"/>
</organismHost>
<organism>
    <name type="scientific">Sulfolobus islandicus rod-shaped virus 1</name>
    <name type="common">SIRV-1</name>
    <name type="synonym">Sulfolobus virus SIRV-1</name>
    <dbReference type="NCBI Taxonomy" id="157898"/>
    <lineage>
        <taxon>Viruses</taxon>
        <taxon>Adnaviria</taxon>
        <taxon>Zilligvirae</taxon>
        <taxon>Taleaviricota</taxon>
        <taxon>Tokiviricetes</taxon>
        <taxon>Ligamenvirales</taxon>
        <taxon>Rudiviridae</taxon>
        <taxon>Icerudivirus</taxon>
        <taxon>Icerudivirus SIRV1</taxon>
    </lineage>
</organism>
<gene>
    <name type="ORF">440</name>
</gene>
<dbReference type="EMBL" id="AJ414696">
    <property type="protein sequence ID" value="CAC93966.1"/>
    <property type="molecule type" value="Genomic_DNA"/>
</dbReference>
<dbReference type="EMBL" id="AJ748296">
    <property type="protein sequence ID" value="CAG38831.1"/>
    <property type="molecule type" value="Genomic_DNA"/>
</dbReference>
<dbReference type="RefSeq" id="NP_666599.1">
    <property type="nucleotide sequence ID" value="NC_004087.1"/>
</dbReference>
<dbReference type="KEGG" id="vg:951397"/>
<dbReference type="OrthoDB" id="2450at10239"/>
<dbReference type="Proteomes" id="UP000002270">
    <property type="component" value="Genome"/>
</dbReference>
<dbReference type="Proteomes" id="UP000223181">
    <property type="component" value="Segment"/>
</dbReference>
<dbReference type="InterPro" id="IPR014061">
    <property type="entry name" value="BrxL-like"/>
</dbReference>
<dbReference type="Pfam" id="PF13337">
    <property type="entry name" value="BrxL_ATPase"/>
    <property type="match status" value="1"/>
</dbReference>
<proteinExistence type="predicted"/>
<accession>Q8QL43</accession>
<accession>Q5TJA7</accession>
<sequence>MSGNQQTNSQLFEKLKSHSFFYNPRDNERILSLILGEKQVEENKKIEILKAYKRGIDSQYFSANLPYYNEIKFISKITGFKVKDDLVIAKFQNGFTGDFDPHEIADNPDDFYNLISSYMFVKIKKGSENWFIDEIFSIEPPNNFEIAKEILEEADKEHLTYAVLLQAFGYDSQKMDSDDIFLTLPRLFPLFKSPITKRQINTIEISNRGTGKTTTFMILQEVFNFRYYTEPPTYANLIYDARNNMYGSVFLSNGLIFDEIQTWKDGYAVKELNSINSTLSTGIENCIWTRGAGTESKSATIQKCIPIIYAGNPFSLTLDKYQTPDIESYLQQYEIFTPAILDRIHIIQLAIKKTYDKIINARVLYPSILRALVELIQEKINRTTNYADCGNLESRRKEQSIDIQIVLQALDIDLQIGKVSNEEVCNKIVNLMRFSNLGGW</sequence>
<name>Y440_SIRV1</name>
<protein>
    <recommendedName>
        <fullName>Uncharacterized protein 440</fullName>
    </recommendedName>
</protein>
<reference key="1">
    <citation type="journal article" date="2001" name="Virology">
        <title>Sequences and replication of genomes of the archaeal rudiviruses SIRV1 and SIRV2: relationships to the archaeal lipothrixvirus SIFV and some eukaryal viruses.</title>
        <authorList>
            <person name="Peng X."/>
            <person name="Blum H."/>
            <person name="She Q."/>
            <person name="Mallok S."/>
            <person name="Bruegger K."/>
            <person name="Garrett R.A."/>
            <person name="Zillig W."/>
            <person name="Prangishvili D."/>
        </authorList>
    </citation>
    <scope>NUCLEOTIDE SEQUENCE [LARGE SCALE GENOMIC DNA]</scope>
    <source>
        <strain>Isolate variant VIII</strain>
    </source>
</reference>
<reference key="2">
    <citation type="journal article" date="2004" name="Mol. Microbiol.">
        <title>Multiple variants of the archaeal DNA rudivirus SIRV1 in a single host and a novel mechanism of genomic variation.</title>
        <authorList>
            <person name="Peng X."/>
            <person name="Kessler A."/>
            <person name="Phan H."/>
            <person name="Garrett R.A."/>
            <person name="Prangishvili D."/>
        </authorList>
    </citation>
    <scope>NUCLEOTIDE SEQUENCE [LARGE SCALE GENOMIC DNA]</scope>
    <source>
        <strain>Isolate variant XX</strain>
    </source>
</reference>